<protein>
    <recommendedName>
        <fullName>Progesterone receptor</fullName>
        <shortName>PR</shortName>
    </recommendedName>
    <alternativeName>
        <fullName>Nuclear receptor subfamily 3 group C member 3</fullName>
    </alternativeName>
</protein>
<evidence type="ECO:0000250" key="1"/>
<evidence type="ECO:0000250" key="2">
    <source>
        <dbReference type="UniProtKB" id="P06401"/>
    </source>
</evidence>
<evidence type="ECO:0000250" key="3">
    <source>
        <dbReference type="UniProtKB" id="Q00175"/>
    </source>
</evidence>
<evidence type="ECO:0000255" key="4"/>
<evidence type="ECO:0000255" key="5">
    <source>
        <dbReference type="PROSITE-ProRule" id="PRU00407"/>
    </source>
</evidence>
<evidence type="ECO:0000255" key="6">
    <source>
        <dbReference type="PROSITE-ProRule" id="PRU01189"/>
    </source>
</evidence>
<evidence type="ECO:0000256" key="7">
    <source>
        <dbReference type="SAM" id="MobiDB-lite"/>
    </source>
</evidence>
<evidence type="ECO:0000305" key="8"/>
<keyword id="KW-0963">Cytoplasm</keyword>
<keyword id="KW-0238">DNA-binding</keyword>
<keyword id="KW-1017">Isopeptide bond</keyword>
<keyword id="KW-0446">Lipid-binding</keyword>
<keyword id="KW-0449">Lipoprotein</keyword>
<keyword id="KW-0479">Metal-binding</keyword>
<keyword id="KW-0539">Nucleus</keyword>
<keyword id="KW-0564">Palmitate</keyword>
<keyword id="KW-0597">Phosphoprotein</keyword>
<keyword id="KW-0675">Receptor</keyword>
<keyword id="KW-1185">Reference proteome</keyword>
<keyword id="KW-0754">Steroid-binding</keyword>
<keyword id="KW-0804">Transcription</keyword>
<keyword id="KW-0805">Transcription regulation</keyword>
<keyword id="KW-0832">Ubl conjugation</keyword>
<keyword id="KW-0862">Zinc</keyword>
<keyword id="KW-0863">Zinc-finger</keyword>
<feature type="chain" id="PRO_0000375857" description="Progesterone receptor">
    <location>
        <begin position="1"/>
        <end position="933"/>
    </location>
</feature>
<feature type="domain" description="NR LBD" evidence="6">
    <location>
        <begin position="679"/>
        <end position="913"/>
    </location>
</feature>
<feature type="DNA-binding region" description="Nuclear receptor" evidence="5">
    <location>
        <begin position="567"/>
        <end position="639"/>
    </location>
</feature>
<feature type="zinc finger region" description="NR C4-type" evidence="5">
    <location>
        <begin position="567"/>
        <end position="587"/>
    </location>
</feature>
<feature type="zinc finger region" description="NR C4-type" evidence="5">
    <location>
        <begin position="603"/>
        <end position="627"/>
    </location>
</feature>
<feature type="region of interest" description="Modulating, Pro-Rich">
    <location>
        <begin position="1"/>
        <end position="566"/>
    </location>
</feature>
<feature type="region of interest" description="Disordered" evidence="7">
    <location>
        <begin position="1"/>
        <end position="256"/>
    </location>
</feature>
<feature type="region of interest" description="AF3; mediates transcriptional activation" evidence="2">
    <location>
        <begin position="1"/>
        <end position="164"/>
    </location>
</feature>
<feature type="region of interest" description="Mediates transcriptional transrepression" evidence="2">
    <location>
        <begin position="165"/>
        <end position="305"/>
    </location>
</feature>
<feature type="region of interest" description="Disordered" evidence="7">
    <location>
        <begin position="331"/>
        <end position="378"/>
    </location>
</feature>
<feature type="region of interest" description="Disordered" evidence="7">
    <location>
        <begin position="415"/>
        <end position="452"/>
    </location>
</feature>
<feature type="region of interest" description="AF1; mediates transcriptional activation" evidence="2">
    <location>
        <begin position="456"/>
        <end position="546"/>
    </location>
</feature>
<feature type="region of interest" description="AF2; mediates transcriptional activation" evidence="2">
    <location>
        <begin position="687"/>
        <end position="933"/>
    </location>
</feature>
<feature type="short sequence motif" description="LXXL motif 1" evidence="2">
    <location>
        <begin position="55"/>
        <end position="59"/>
    </location>
</feature>
<feature type="short sequence motif" description="LXXL motif 2" evidence="2">
    <location>
        <begin position="115"/>
        <end position="119"/>
    </location>
</feature>
<feature type="short sequence motif" description="Nuclear localization signal" evidence="4">
    <location>
        <begin position="183"/>
        <end position="187"/>
    </location>
</feature>
<feature type="compositionally biased region" description="Acidic residues" evidence="7">
    <location>
        <begin position="220"/>
        <end position="231"/>
    </location>
</feature>
<feature type="compositionally biased region" description="Low complexity" evidence="7">
    <location>
        <begin position="232"/>
        <end position="246"/>
    </location>
</feature>
<feature type="compositionally biased region" description="Low complexity" evidence="7">
    <location>
        <begin position="335"/>
        <end position="350"/>
    </location>
</feature>
<feature type="compositionally biased region" description="Pro residues" evidence="7">
    <location>
        <begin position="418"/>
        <end position="433"/>
    </location>
</feature>
<feature type="compositionally biased region" description="Low complexity" evidence="7">
    <location>
        <begin position="434"/>
        <end position="452"/>
    </location>
</feature>
<feature type="binding site" evidence="2">
    <location>
        <position position="766"/>
    </location>
    <ligand>
        <name>progesterone</name>
        <dbReference type="ChEBI" id="CHEBI:17026"/>
    </ligand>
</feature>
<feature type="modified residue" description="Phosphoserine" evidence="2">
    <location>
        <position position="20"/>
    </location>
</feature>
<feature type="modified residue" description="Phosphoserine" evidence="2">
    <location>
        <position position="81"/>
    </location>
</feature>
<feature type="modified residue" description="Phosphoserine" evidence="2">
    <location>
        <position position="130"/>
    </location>
</feature>
<feature type="modified residue" description="Phosphoserine" evidence="2">
    <location>
        <position position="162"/>
    </location>
</feature>
<feature type="modified residue" description="Phosphoserine" evidence="2">
    <location>
        <position position="190"/>
    </location>
</feature>
<feature type="modified residue" description="Phosphoserine" evidence="2">
    <location>
        <position position="213"/>
    </location>
</feature>
<feature type="modified residue" description="Phosphoserine; by MAPK1" evidence="2">
    <location>
        <position position="294"/>
    </location>
</feature>
<feature type="modified residue" description="Phosphoserine; by MAPK" evidence="2">
    <location>
        <position position="345"/>
    </location>
</feature>
<feature type="modified residue" description="Phosphoserine; by CDK2" evidence="2">
    <location>
        <position position="400"/>
    </location>
</feature>
<feature type="modified residue" description="Phosphoserine" evidence="2">
    <location>
        <position position="676"/>
    </location>
</feature>
<feature type="cross-link" description="Glycyl lysine isopeptide (Lys-Gly) (interchain with G-Cter in SUMO); alternate" evidence="1">
    <location>
        <position position="388"/>
    </location>
</feature>
<feature type="cross-link" description="Glycyl lysine isopeptide (Lys-Gly) (interchain with G-Cter in ubiquitin); alternate" evidence="2">
    <location>
        <position position="388"/>
    </location>
</feature>
<feature type="cross-link" description="Glycyl lysine isopeptide (Lys-Gly) (interchain with G-Cter in SUMO)" evidence="1">
    <location>
        <position position="531"/>
    </location>
</feature>
<comment type="function">
    <text evidence="2">The steroid hormones and their receptors are involved in the regulation of eukaryotic gene expression and affect cellular proliferation and differentiation in target tissues. Transcriptional activator of several progesteron-dependent promoters in a variety of cell types. Involved in activation of SRC-dependent MAPK signaling on hormone stimulation.</text>
</comment>
<comment type="subunit">
    <text evidence="2 3">Interacts with SMARD1 and UNC45A. Interacts with CUEDC2; the interaction promotes ubiquitination, decreases sumoylation, and represses transcriptional activity. Interacts with PIAS3; the interaction promotes sumoylation of PR in a hormone-dependent manner, inhibits DNA-binding, and alters nuclear export. Interacts with SP1; the interaction requires ligand-induced phosphorylation on Ser-345 by ERK1/2-MAPK. Interacts with PRMT2. Interacts with NCOA2 and NCOA1. Interacts with KLF9. Interacts with GTF2B (By similarity).</text>
</comment>
<comment type="subcellular location">
    <subcellularLocation>
        <location>Nucleus</location>
    </subcellularLocation>
    <subcellularLocation>
        <location>Cytoplasm</location>
    </subcellularLocation>
    <text evidence="1">Nucleoplasmic shuttling is both hormone- and cell cycle-dependent. On hormone stimulation, retained in the cytoplasm in the G(1) and G(2)/M phases (By similarity).</text>
</comment>
<comment type="domain">
    <text>Composed of three domains: a modulating N-terminal domain, a DNA-binding domain and a C-terminal ligand-binding domain.</text>
</comment>
<comment type="PTM">
    <text evidence="1">Phosphorylated on multiple serine sites. Several of these sites are hormone-dependent. Phosphorylation on Ser-294 is highly hormone-dependent and modulates ubiquitination and sumoylation on Lys-388. Phosphorylation on Ser-102 and Ser-345 also requires induction by hormone. Basal phosphorylation on Ser-81, Ser-162, Ser-190 and Ser-400 is increased in response to progesterone and can be phosphorylated in vitro by the CDK2-A1 complex. Increased levels of phosphorylation on Ser-400 also in the presence of EGF, heregulin, IGF, PMA and FBS. Phosphorylation at this site by CDK2 is ligand-independent, and increases nuclear translocation and transcriptional activity. Phosphorylation at Ser-162 and Ser-294, but not at Ser-190, is impaired during the G(2)/M phase of the cell cycle. Phosphorylation on Ser-345 by ERK1/2 MAPK is required for interaction with SP1 (By similarity).</text>
</comment>
<comment type="PTM">
    <text evidence="1">Sumoylation is hormone-dependent and represses transcriptional activity. Sumoylation on all three sites is enhanced by PIAS3. Desumoylated by SENP1. Sumoylation on Lys-388, the main site of sumoylation, is repressed by ubiquitination on the same site, and modulated by phosphorylation at Ser-294 (By similarity).</text>
</comment>
<comment type="PTM">
    <text evidence="2">Ubiquitination is hormone-dependent and represses sumoylation on the same site (By similarity). Promoted by MAPK-mediated phosphorylation on Ser-294 (By similarity). Ubiquitinated by UBR5, leading to its degradation: UBR5 specifically recognizes and binds ligand-bound PGR when it is not associated with coactivators (NCOAs) (By similarity). In presence of NCOAs, the UBR5-degron is not accessible, preventing its ubiquitination and degradation (By similarity).</text>
</comment>
<comment type="PTM">
    <text evidence="1">Palmitoylated by ZDHHC7 and ZDHHC21. Palmitoylation is required for plasma membrane targeting and for rapid intracellular signaling via ERK and AKT kinases and cAMP generation (By similarity).</text>
</comment>
<comment type="similarity">
    <text evidence="8">Belongs to the nuclear hormone receptor family.</text>
</comment>
<gene>
    <name type="primary">PGR</name>
    <name type="synonym">NR3C3</name>
</gene>
<proteinExistence type="inferred from homology"/>
<reference key="1">
    <citation type="journal article" date="2008" name="Mol. Phylogenet. Evol.">
        <title>The human progesterone receptor shows evidence of adaptive evolution associated with its ability to act as a transcription factor.</title>
        <authorList>
            <person name="Chen C."/>
            <person name="Opazo J.C."/>
            <person name="Erez O."/>
            <person name="Uddin M."/>
            <person name="Santolaya-Forgas J."/>
            <person name="Goodman M."/>
            <person name="Grossman L.I."/>
            <person name="Romero R."/>
            <person name="Wildman D.E."/>
        </authorList>
    </citation>
    <scope>NUCLEOTIDE SEQUENCE [GENOMIC DNA]</scope>
</reference>
<sequence length="933" mass="98838">MTELKAKGPRAPHVAGGPPSPEVGSPLLCRPAAGPFPGSQTSDTLPEVSAIPISLDGLLFPRPCQGQDPSNEKTQDQQSLSDVEGAYSRAEATRGAGGSSSSPPEKDSGLLDSVLDTLLAPSGPGQSQPSPPACEVTSSWCLFGPELPEDPPAAPATQGVLSPLMSRSGCKAGDSSGTAAAHKVLPRGLSPSRQLLLPASGSPHWSGAPVKPSPQPAAVEVEEEDGSESEESAGPLLKGKPRALGGAAAGGGAAAVPPGAAAGGVALVPKEDSRFSAPRVALVEQDAPMAPGRSPLATTMMDFIHVPILPLNHALLAARTRQLLEDESYDGGAGAASAFAPPRSSPSASSTPVAVGDFPDCAYPPDAEPKDDAYPLYSDFQPPALKIKEEEEGAEASARSPRSYLVAGANPAAFPDFPLGPPPPLPPRAPPSRPGEAAVTAAPASASVSSASSSGSTLECILYKAEGAPPQQGPFAPPPCKAPGASGCLLPRDGLPSTSASAAAAGAAPALYPALGLSGLPQLGYQATVLKEGLPQVYPPYLNYLRPDSEASQSPQYSFESLPQKICLICGDEASGCHYGVLTCGSCKVFFKRAMEGQHNYLCAGRNDCIVDKIRRKNCPACRLRKCCQAGMVLGGRKFKKFNKVRVVRALDAVALPQPVGIPNESQALSQRFSFSPGQDIQLIPPLINLLMSIEPDVIYAGHDNTKPDTSSSLLTSLNQLGERQLLSVVKWSKSLPGFRNLHIDDQITLIQYSWMSLMVFGLGWRSYKHVSGQMLYFAPDLILNEQRMKESSFYSLCLTMWQIPQEFVKLQVSQEEFLCMKVLLLLNTIPLEGLRSQTQFEEMRSSYIRELIKAIGLRQKGVVSSSQRFYQLTKLLDNLHDLVKQLHLYCLNTFIQSRALSVEFPEMMSEVIAAQLPKILAGMVKPLLFHKK</sequence>
<accession>A7X8B5</accession>
<dbReference type="EMBL" id="DQ234981">
    <property type="protein sequence ID" value="ABB72141.1"/>
    <property type="molecule type" value="Genomic_DNA"/>
</dbReference>
<dbReference type="SMR" id="A7X8B5"/>
<dbReference type="STRING" id="9597.ENSPPAP00000009925"/>
<dbReference type="eggNOG" id="KOG3575">
    <property type="taxonomic scope" value="Eukaryota"/>
</dbReference>
<dbReference type="Proteomes" id="UP000240080">
    <property type="component" value="Unplaced"/>
</dbReference>
<dbReference type="GO" id="GO:0005737">
    <property type="term" value="C:cytoplasm"/>
    <property type="evidence" value="ECO:0007669"/>
    <property type="project" value="UniProtKB-SubCell"/>
</dbReference>
<dbReference type="GO" id="GO:0005654">
    <property type="term" value="C:nucleoplasm"/>
    <property type="evidence" value="ECO:0007669"/>
    <property type="project" value="UniProtKB-ARBA"/>
</dbReference>
<dbReference type="GO" id="GO:0003707">
    <property type="term" value="F:nuclear steroid receptor activity"/>
    <property type="evidence" value="ECO:0007669"/>
    <property type="project" value="InterPro"/>
</dbReference>
<dbReference type="GO" id="GO:1990837">
    <property type="term" value="F:sequence-specific double-stranded DNA binding"/>
    <property type="evidence" value="ECO:0007669"/>
    <property type="project" value="UniProtKB-ARBA"/>
</dbReference>
<dbReference type="GO" id="GO:0005496">
    <property type="term" value="F:steroid binding"/>
    <property type="evidence" value="ECO:0007669"/>
    <property type="project" value="UniProtKB-KW"/>
</dbReference>
<dbReference type="GO" id="GO:0008270">
    <property type="term" value="F:zinc ion binding"/>
    <property type="evidence" value="ECO:0007669"/>
    <property type="project" value="UniProtKB-KW"/>
</dbReference>
<dbReference type="CDD" id="cd07172">
    <property type="entry name" value="NR_DBD_GR_PR"/>
    <property type="match status" value="1"/>
</dbReference>
<dbReference type="CDD" id="cd07074">
    <property type="entry name" value="NR_LBD_PR"/>
    <property type="match status" value="1"/>
</dbReference>
<dbReference type="FunFam" id="1.10.565.10:FF:000004">
    <property type="entry name" value="Androgen receptor variant"/>
    <property type="match status" value="1"/>
</dbReference>
<dbReference type="FunFam" id="3.30.50.10:FF:000027">
    <property type="entry name" value="Progesterone receptor"/>
    <property type="match status" value="1"/>
</dbReference>
<dbReference type="Gene3D" id="3.30.50.10">
    <property type="entry name" value="Erythroid Transcription Factor GATA-1, subunit A"/>
    <property type="match status" value="1"/>
</dbReference>
<dbReference type="Gene3D" id="1.10.565.10">
    <property type="entry name" value="Retinoid X Receptor"/>
    <property type="match status" value="1"/>
</dbReference>
<dbReference type="InterPro" id="IPR035500">
    <property type="entry name" value="NHR-like_dom_sf"/>
</dbReference>
<dbReference type="InterPro" id="IPR000536">
    <property type="entry name" value="Nucl_hrmn_rcpt_lig-bd"/>
</dbReference>
<dbReference type="InterPro" id="IPR050200">
    <property type="entry name" value="Nuclear_hormone_rcpt_NR3"/>
</dbReference>
<dbReference type="InterPro" id="IPR001723">
    <property type="entry name" value="Nuclear_hrmn_rcpt"/>
</dbReference>
<dbReference type="InterPro" id="IPR000128">
    <property type="entry name" value="Progest_rcpt"/>
</dbReference>
<dbReference type="InterPro" id="IPR001628">
    <property type="entry name" value="Znf_hrmn_rcpt"/>
</dbReference>
<dbReference type="InterPro" id="IPR013088">
    <property type="entry name" value="Znf_NHR/GATA"/>
</dbReference>
<dbReference type="PANTHER" id="PTHR48092">
    <property type="entry name" value="KNIRPS-RELATED PROTEIN-RELATED"/>
    <property type="match status" value="1"/>
</dbReference>
<dbReference type="Pfam" id="PF00104">
    <property type="entry name" value="Hormone_recep"/>
    <property type="match status" value="1"/>
</dbReference>
<dbReference type="Pfam" id="PF02161">
    <property type="entry name" value="Prog_receptor"/>
    <property type="match status" value="1"/>
</dbReference>
<dbReference type="Pfam" id="PF00105">
    <property type="entry name" value="zf-C4"/>
    <property type="match status" value="1"/>
</dbReference>
<dbReference type="PRINTS" id="PR00544">
    <property type="entry name" value="PROGESTRONER"/>
</dbReference>
<dbReference type="PRINTS" id="PR00398">
    <property type="entry name" value="STRDHORMONER"/>
</dbReference>
<dbReference type="PRINTS" id="PR00047">
    <property type="entry name" value="STROIDFINGER"/>
</dbReference>
<dbReference type="SMART" id="SM00430">
    <property type="entry name" value="HOLI"/>
    <property type="match status" value="1"/>
</dbReference>
<dbReference type="SMART" id="SM00399">
    <property type="entry name" value="ZnF_C4"/>
    <property type="match status" value="1"/>
</dbReference>
<dbReference type="SUPFAM" id="SSF57716">
    <property type="entry name" value="Glucocorticoid receptor-like (DNA-binding domain)"/>
    <property type="match status" value="1"/>
</dbReference>
<dbReference type="SUPFAM" id="SSF48508">
    <property type="entry name" value="Nuclear receptor ligand-binding domain"/>
    <property type="match status" value="1"/>
</dbReference>
<dbReference type="PROSITE" id="PS51843">
    <property type="entry name" value="NR_LBD"/>
    <property type="match status" value="1"/>
</dbReference>
<dbReference type="PROSITE" id="PS00031">
    <property type="entry name" value="NUCLEAR_REC_DBD_1"/>
    <property type="match status" value="1"/>
</dbReference>
<dbReference type="PROSITE" id="PS51030">
    <property type="entry name" value="NUCLEAR_REC_DBD_2"/>
    <property type="match status" value="1"/>
</dbReference>
<name>PRGR_PANPA</name>
<organism>
    <name type="scientific">Pan paniscus</name>
    <name type="common">Pygmy chimpanzee</name>
    <name type="synonym">Bonobo</name>
    <dbReference type="NCBI Taxonomy" id="9597"/>
    <lineage>
        <taxon>Eukaryota</taxon>
        <taxon>Metazoa</taxon>
        <taxon>Chordata</taxon>
        <taxon>Craniata</taxon>
        <taxon>Vertebrata</taxon>
        <taxon>Euteleostomi</taxon>
        <taxon>Mammalia</taxon>
        <taxon>Eutheria</taxon>
        <taxon>Euarchontoglires</taxon>
        <taxon>Primates</taxon>
        <taxon>Haplorrhini</taxon>
        <taxon>Catarrhini</taxon>
        <taxon>Hominidae</taxon>
        <taxon>Pan</taxon>
    </lineage>
</organism>